<evidence type="ECO:0000255" key="1">
    <source>
        <dbReference type="HAMAP-Rule" id="MF_00110"/>
    </source>
</evidence>
<feature type="chain" id="PRO_0000140711" description="3-dehydroquinate synthase">
    <location>
        <begin position="1"/>
        <end position="358"/>
    </location>
</feature>
<feature type="binding site" evidence="1">
    <location>
        <begin position="70"/>
        <end position="75"/>
    </location>
    <ligand>
        <name>NAD(+)</name>
        <dbReference type="ChEBI" id="CHEBI:57540"/>
    </ligand>
</feature>
<feature type="binding site" evidence="1">
    <location>
        <begin position="104"/>
        <end position="108"/>
    </location>
    <ligand>
        <name>NAD(+)</name>
        <dbReference type="ChEBI" id="CHEBI:57540"/>
    </ligand>
</feature>
<feature type="binding site" evidence="1">
    <location>
        <begin position="128"/>
        <end position="129"/>
    </location>
    <ligand>
        <name>NAD(+)</name>
        <dbReference type="ChEBI" id="CHEBI:57540"/>
    </ligand>
</feature>
<feature type="binding site" evidence="1">
    <location>
        <position position="141"/>
    </location>
    <ligand>
        <name>NAD(+)</name>
        <dbReference type="ChEBI" id="CHEBI:57540"/>
    </ligand>
</feature>
<feature type="binding site" evidence="1">
    <location>
        <position position="150"/>
    </location>
    <ligand>
        <name>NAD(+)</name>
        <dbReference type="ChEBI" id="CHEBI:57540"/>
    </ligand>
</feature>
<feature type="binding site" evidence="1">
    <location>
        <position position="183"/>
    </location>
    <ligand>
        <name>Zn(2+)</name>
        <dbReference type="ChEBI" id="CHEBI:29105"/>
    </ligand>
</feature>
<feature type="binding site" evidence="1">
    <location>
        <position position="246"/>
    </location>
    <ligand>
        <name>Zn(2+)</name>
        <dbReference type="ChEBI" id="CHEBI:29105"/>
    </ligand>
</feature>
<feature type="binding site" evidence="1">
    <location>
        <position position="263"/>
    </location>
    <ligand>
        <name>Zn(2+)</name>
        <dbReference type="ChEBI" id="CHEBI:29105"/>
    </ligand>
</feature>
<proteinExistence type="inferred from homology"/>
<name>AROB_BORBR</name>
<keyword id="KW-0028">Amino-acid biosynthesis</keyword>
<keyword id="KW-0057">Aromatic amino acid biosynthesis</keyword>
<keyword id="KW-0170">Cobalt</keyword>
<keyword id="KW-0963">Cytoplasm</keyword>
<keyword id="KW-0456">Lyase</keyword>
<keyword id="KW-0479">Metal-binding</keyword>
<keyword id="KW-0520">NAD</keyword>
<keyword id="KW-0547">Nucleotide-binding</keyword>
<keyword id="KW-0862">Zinc</keyword>
<accession>Q7WR84</accession>
<dbReference type="EC" id="4.2.3.4" evidence="1"/>
<dbReference type="EMBL" id="BX640437">
    <property type="protein sequence ID" value="CAE30574.1"/>
    <property type="molecule type" value="Genomic_DNA"/>
</dbReference>
<dbReference type="RefSeq" id="WP_003806948.1">
    <property type="nucleotide sequence ID" value="NC_002927.3"/>
</dbReference>
<dbReference type="SMR" id="Q7WR84"/>
<dbReference type="GeneID" id="93206303"/>
<dbReference type="KEGG" id="bbr:BB0072"/>
<dbReference type="eggNOG" id="COG0337">
    <property type="taxonomic scope" value="Bacteria"/>
</dbReference>
<dbReference type="HOGENOM" id="CLU_001201_0_2_4"/>
<dbReference type="UniPathway" id="UPA00053">
    <property type="reaction ID" value="UER00085"/>
</dbReference>
<dbReference type="Proteomes" id="UP000001027">
    <property type="component" value="Chromosome"/>
</dbReference>
<dbReference type="GO" id="GO:0005737">
    <property type="term" value="C:cytoplasm"/>
    <property type="evidence" value="ECO:0007669"/>
    <property type="project" value="UniProtKB-SubCell"/>
</dbReference>
<dbReference type="GO" id="GO:0003856">
    <property type="term" value="F:3-dehydroquinate synthase activity"/>
    <property type="evidence" value="ECO:0007669"/>
    <property type="project" value="UniProtKB-UniRule"/>
</dbReference>
<dbReference type="GO" id="GO:0046872">
    <property type="term" value="F:metal ion binding"/>
    <property type="evidence" value="ECO:0007669"/>
    <property type="project" value="UniProtKB-KW"/>
</dbReference>
<dbReference type="GO" id="GO:0000166">
    <property type="term" value="F:nucleotide binding"/>
    <property type="evidence" value="ECO:0007669"/>
    <property type="project" value="UniProtKB-KW"/>
</dbReference>
<dbReference type="GO" id="GO:0008652">
    <property type="term" value="P:amino acid biosynthetic process"/>
    <property type="evidence" value="ECO:0007669"/>
    <property type="project" value="UniProtKB-KW"/>
</dbReference>
<dbReference type="GO" id="GO:0009073">
    <property type="term" value="P:aromatic amino acid family biosynthetic process"/>
    <property type="evidence" value="ECO:0007669"/>
    <property type="project" value="UniProtKB-KW"/>
</dbReference>
<dbReference type="GO" id="GO:0009423">
    <property type="term" value="P:chorismate biosynthetic process"/>
    <property type="evidence" value="ECO:0007669"/>
    <property type="project" value="UniProtKB-UniRule"/>
</dbReference>
<dbReference type="CDD" id="cd08195">
    <property type="entry name" value="DHQS"/>
    <property type="match status" value="1"/>
</dbReference>
<dbReference type="FunFam" id="3.40.50.1970:FF:000001">
    <property type="entry name" value="3-dehydroquinate synthase"/>
    <property type="match status" value="1"/>
</dbReference>
<dbReference type="Gene3D" id="3.40.50.1970">
    <property type="match status" value="1"/>
</dbReference>
<dbReference type="Gene3D" id="1.20.1090.10">
    <property type="entry name" value="Dehydroquinate synthase-like - alpha domain"/>
    <property type="match status" value="1"/>
</dbReference>
<dbReference type="HAMAP" id="MF_00110">
    <property type="entry name" value="DHQ_synthase"/>
    <property type="match status" value="1"/>
</dbReference>
<dbReference type="InterPro" id="IPR050071">
    <property type="entry name" value="Dehydroquinate_synthase"/>
</dbReference>
<dbReference type="InterPro" id="IPR016037">
    <property type="entry name" value="DHQ_synth_AroB"/>
</dbReference>
<dbReference type="InterPro" id="IPR030963">
    <property type="entry name" value="DHQ_synth_fam"/>
</dbReference>
<dbReference type="InterPro" id="IPR030960">
    <property type="entry name" value="DHQS/DOIS_N"/>
</dbReference>
<dbReference type="InterPro" id="IPR056179">
    <property type="entry name" value="DHQS_C"/>
</dbReference>
<dbReference type="NCBIfam" id="TIGR01357">
    <property type="entry name" value="aroB"/>
    <property type="match status" value="1"/>
</dbReference>
<dbReference type="PANTHER" id="PTHR43622">
    <property type="entry name" value="3-DEHYDROQUINATE SYNTHASE"/>
    <property type="match status" value="1"/>
</dbReference>
<dbReference type="PANTHER" id="PTHR43622:SF7">
    <property type="entry name" value="3-DEHYDROQUINATE SYNTHASE, CHLOROPLASTIC"/>
    <property type="match status" value="1"/>
</dbReference>
<dbReference type="Pfam" id="PF01761">
    <property type="entry name" value="DHQ_synthase"/>
    <property type="match status" value="1"/>
</dbReference>
<dbReference type="Pfam" id="PF24621">
    <property type="entry name" value="DHQS_C"/>
    <property type="match status" value="1"/>
</dbReference>
<dbReference type="PIRSF" id="PIRSF001455">
    <property type="entry name" value="DHQ_synth"/>
    <property type="match status" value="1"/>
</dbReference>
<dbReference type="SUPFAM" id="SSF56796">
    <property type="entry name" value="Dehydroquinate synthase-like"/>
    <property type="match status" value="1"/>
</dbReference>
<organism>
    <name type="scientific">Bordetella bronchiseptica (strain ATCC BAA-588 / NCTC 13252 / RB50)</name>
    <name type="common">Alcaligenes bronchisepticus</name>
    <dbReference type="NCBI Taxonomy" id="257310"/>
    <lineage>
        <taxon>Bacteria</taxon>
        <taxon>Pseudomonadati</taxon>
        <taxon>Pseudomonadota</taxon>
        <taxon>Betaproteobacteria</taxon>
        <taxon>Burkholderiales</taxon>
        <taxon>Alcaligenaceae</taxon>
        <taxon>Bordetella</taxon>
    </lineage>
</organism>
<comment type="function">
    <text evidence="1">Catalyzes the conversion of 3-deoxy-D-arabino-heptulosonate 7-phosphate (DAHP) to dehydroquinate (DHQ).</text>
</comment>
<comment type="catalytic activity">
    <reaction evidence="1">
        <text>7-phospho-2-dehydro-3-deoxy-D-arabino-heptonate = 3-dehydroquinate + phosphate</text>
        <dbReference type="Rhea" id="RHEA:21968"/>
        <dbReference type="ChEBI" id="CHEBI:32364"/>
        <dbReference type="ChEBI" id="CHEBI:43474"/>
        <dbReference type="ChEBI" id="CHEBI:58394"/>
        <dbReference type="EC" id="4.2.3.4"/>
    </reaction>
</comment>
<comment type="cofactor">
    <cofactor evidence="1">
        <name>NAD(+)</name>
        <dbReference type="ChEBI" id="CHEBI:57540"/>
    </cofactor>
</comment>
<comment type="cofactor">
    <cofactor evidence="1">
        <name>Co(2+)</name>
        <dbReference type="ChEBI" id="CHEBI:48828"/>
    </cofactor>
    <cofactor evidence="1">
        <name>Zn(2+)</name>
        <dbReference type="ChEBI" id="CHEBI:29105"/>
    </cofactor>
    <text evidence="1">Binds 1 divalent metal cation per subunit. Can use either Co(2+) or Zn(2+).</text>
</comment>
<comment type="pathway">
    <text evidence="1">Metabolic intermediate biosynthesis; chorismate biosynthesis; chorismate from D-erythrose 4-phosphate and phosphoenolpyruvate: step 2/7.</text>
</comment>
<comment type="subcellular location">
    <subcellularLocation>
        <location evidence="1">Cytoplasm</location>
    </subcellularLocation>
</comment>
<comment type="similarity">
    <text evidence="1">Belongs to the sugar phosphate cyclases superfamily. Dehydroquinate synthase family.</text>
</comment>
<protein>
    <recommendedName>
        <fullName evidence="1">3-dehydroquinate synthase</fullName>
        <shortName evidence="1">DHQS</shortName>
        <ecNumber evidence="1">4.2.3.4</ecNumber>
    </recommendedName>
</protein>
<gene>
    <name evidence="1" type="primary">aroB</name>
    <name type="ordered locus">BB0072</name>
</gene>
<reference key="1">
    <citation type="journal article" date="2003" name="Nat. Genet.">
        <title>Comparative analysis of the genome sequences of Bordetella pertussis, Bordetella parapertussis and Bordetella bronchiseptica.</title>
        <authorList>
            <person name="Parkhill J."/>
            <person name="Sebaihia M."/>
            <person name="Preston A."/>
            <person name="Murphy L.D."/>
            <person name="Thomson N.R."/>
            <person name="Harris D.E."/>
            <person name="Holden M.T.G."/>
            <person name="Churcher C.M."/>
            <person name="Bentley S.D."/>
            <person name="Mungall K.L."/>
            <person name="Cerdeno-Tarraga A.-M."/>
            <person name="Temple L."/>
            <person name="James K.D."/>
            <person name="Harris B."/>
            <person name="Quail M.A."/>
            <person name="Achtman M."/>
            <person name="Atkin R."/>
            <person name="Baker S."/>
            <person name="Basham D."/>
            <person name="Bason N."/>
            <person name="Cherevach I."/>
            <person name="Chillingworth T."/>
            <person name="Collins M."/>
            <person name="Cronin A."/>
            <person name="Davis P."/>
            <person name="Doggett J."/>
            <person name="Feltwell T."/>
            <person name="Goble A."/>
            <person name="Hamlin N."/>
            <person name="Hauser H."/>
            <person name="Holroyd S."/>
            <person name="Jagels K."/>
            <person name="Leather S."/>
            <person name="Moule S."/>
            <person name="Norberczak H."/>
            <person name="O'Neil S."/>
            <person name="Ormond D."/>
            <person name="Price C."/>
            <person name="Rabbinowitsch E."/>
            <person name="Rutter S."/>
            <person name="Sanders M."/>
            <person name="Saunders D."/>
            <person name="Seeger K."/>
            <person name="Sharp S."/>
            <person name="Simmonds M."/>
            <person name="Skelton J."/>
            <person name="Squares R."/>
            <person name="Squares S."/>
            <person name="Stevens K."/>
            <person name="Unwin L."/>
            <person name="Whitehead S."/>
            <person name="Barrell B.G."/>
            <person name="Maskell D.J."/>
        </authorList>
    </citation>
    <scope>NUCLEOTIDE SEQUENCE [LARGE SCALE GENOMIC DNA]</scope>
    <source>
        <strain>ATCC BAA-588 / NCTC 13252 / RB50</strain>
    </source>
</reference>
<sequence>MDVVEVATPGGSYPIHIGPGRLDALDASIPADATAIAVVTNPTVAGLYGARVEAALARTGKRVLRIELPDGEAHKDWQTLNLIFDALLENRLDRRAVLVALGGGVIGDMTGFAAAVYMRGIRFVQVPTTLLAQVDSSVGGKTAVNHPLGKNMIGAFYQPVAVEIDTEVLGTLPAREVSAGLAEVIKYGLILDAGFWQWCEDNVGALRALEPRALAYAIRRSCELKAQVVGQDERESGLRAILNLGHTFGHAIESGLGYGEWLHGEAVGCGMVQAAELSTLAAGFPAADVQRVRDLVREIGCPTVAPDLGAERWLALMQVDKKTEGGEIRFVLMPRIGQALSRAAPEADVRTALERTTR</sequence>